<proteinExistence type="predicted"/>
<name>V45_BPT3</name>
<feature type="chain" id="PRO_0000106494" description="Gene 4.5 protein">
    <location>
        <begin position="1"/>
        <end position="94"/>
    </location>
</feature>
<protein>
    <recommendedName>
        <fullName>Gene 4.5 protein</fullName>
    </recommendedName>
</protein>
<dbReference type="EMBL" id="X17255">
    <property type="protein sequence ID" value="CAA35139.1"/>
    <property type="molecule type" value="Genomic_DNA"/>
</dbReference>
<dbReference type="PIR" id="S07511">
    <property type="entry name" value="S07511"/>
</dbReference>
<dbReference type="RefSeq" id="NP_523319.1">
    <property type="nucleotide sequence ID" value="NC_003298.1"/>
</dbReference>
<dbReference type="KEGG" id="vg:927416"/>
<dbReference type="OrthoDB" id="19432at10239"/>
<dbReference type="InterPro" id="IPR035151">
    <property type="entry name" value="TA_inhibitor"/>
</dbReference>
<dbReference type="Pfam" id="PF17574">
    <property type="entry name" value="TA_inhibitor"/>
    <property type="match status" value="1"/>
</dbReference>
<reference key="1">
    <citation type="journal article" date="1989" name="J. Mol. Biol.">
        <title>Sequence of bacteriophage T3 DNA from gene 2.5 through gene 9.</title>
        <authorList>
            <person name="Beck P.J."/>
            <person name="Gonzalez S."/>
            <person name="Ward C.L."/>
            <person name="Molineux I.J."/>
        </authorList>
    </citation>
    <scope>NUCLEOTIDE SEQUENCE [GENOMIC DNA]</scope>
    <source>
        <strain>Luria</strain>
    </source>
</reference>
<sequence length="94" mass="10746">MSKSIKHANTIRLPDTADQFARRVHINVRGEKVTMVYRWKDHKSPKAHTQRMTLDDKQVGRLMGALTMAADNVVGDNRERLVEFGAGMQEIIEK</sequence>
<organism>
    <name type="scientific">Enterobacteria phage T3</name>
    <name type="common">Bacteriophage T3</name>
    <dbReference type="NCBI Taxonomy" id="10759"/>
    <lineage>
        <taxon>Viruses</taxon>
        <taxon>Duplodnaviria</taxon>
        <taxon>Heunggongvirae</taxon>
        <taxon>Uroviricota</taxon>
        <taxon>Caudoviricetes</taxon>
        <taxon>Autographiviridae</taxon>
        <taxon>Studiervirinae</taxon>
        <taxon>Teetrevirus</taxon>
        <taxon>Teetrevirus T3</taxon>
    </lineage>
</organism>
<gene>
    <name type="primary">4.5</name>
</gene>
<organismHost>
    <name type="scientific">Escherichia coli</name>
    <dbReference type="NCBI Taxonomy" id="562"/>
</organismHost>
<accession>P20318</accession>